<accession>Q9QZN4</accession>
<accession>A2A7H0</accession>
<accession>A2A7H2</accession>
<accession>B2KFL0</accession>
<accession>B2KFL2</accession>
<accession>Q3TML5</accession>
<accession>Q3UCB0</accession>
<gene>
    <name type="primary">Fbxo6</name>
    <name type="synonym">Fbs2</name>
    <name type="synonym">Fbxo6b</name>
</gene>
<feature type="chain" id="PRO_0000119883" description="F-box only protein 6">
    <location>
        <begin position="1"/>
        <end position="295"/>
    </location>
</feature>
<feature type="domain" description="F-box" evidence="3">
    <location>
        <begin position="1"/>
        <end position="48"/>
    </location>
</feature>
<feature type="domain" description="FBA" evidence="4">
    <location>
        <begin position="69"/>
        <end position="250"/>
    </location>
</feature>
<feature type="modified residue" description="Phosphoserine" evidence="2">
    <location>
        <position position="249"/>
    </location>
</feature>
<feature type="modified residue" description="Phosphoserine" evidence="9">
    <location>
        <position position="276"/>
    </location>
</feature>
<feature type="modified residue" description="Phosphothreonine" evidence="9">
    <location>
        <position position="280"/>
    </location>
</feature>
<feature type="sequence conflict" description="In Ref. 3; CAQ52204/CAQ52206/CAQ51912/CAQ51914 and 4; EDL14807/EDL14805/EDL14804." evidence="8" ref="3 4">
    <original>R</original>
    <variation>K</variation>
    <location>
        <position position="77"/>
    </location>
</feature>
<feature type="sequence conflict" description="In Ref. 2; BAE29703." evidence="8" ref="2">
    <original>T</original>
    <variation>A</variation>
    <location>
        <position position="252"/>
    </location>
</feature>
<evidence type="ECO:0000250" key="1"/>
<evidence type="ECO:0000250" key="2">
    <source>
        <dbReference type="UniProtKB" id="Q9NRD1"/>
    </source>
</evidence>
<evidence type="ECO:0000255" key="3">
    <source>
        <dbReference type="PROSITE-ProRule" id="PRU00080"/>
    </source>
</evidence>
<evidence type="ECO:0000255" key="4">
    <source>
        <dbReference type="PROSITE-ProRule" id="PRU00482"/>
    </source>
</evidence>
<evidence type="ECO:0000269" key="5">
    <source>
    </source>
</evidence>
<evidence type="ECO:0000269" key="6">
    <source>
    </source>
</evidence>
<evidence type="ECO:0000269" key="7">
    <source>
    </source>
</evidence>
<evidence type="ECO:0000305" key="8"/>
<evidence type="ECO:0007744" key="9">
    <source>
    </source>
</evidence>
<reference key="1">
    <citation type="journal article" date="1999" name="Curr. Biol.">
        <title>A family of mammalian F-box proteins.</title>
        <authorList>
            <person name="Winston J.T."/>
            <person name="Koepp D.M."/>
            <person name="Zhu C."/>
            <person name="Elledge S.J."/>
            <person name="Harper J.W."/>
        </authorList>
    </citation>
    <scope>NUCLEOTIDE SEQUENCE [MRNA]</scope>
</reference>
<reference key="2">
    <citation type="journal article" date="2005" name="Science">
        <title>The transcriptional landscape of the mammalian genome.</title>
        <authorList>
            <person name="Carninci P."/>
            <person name="Kasukawa T."/>
            <person name="Katayama S."/>
            <person name="Gough J."/>
            <person name="Frith M.C."/>
            <person name="Maeda N."/>
            <person name="Oyama R."/>
            <person name="Ravasi T."/>
            <person name="Lenhard B."/>
            <person name="Wells C."/>
            <person name="Kodzius R."/>
            <person name="Shimokawa K."/>
            <person name="Bajic V.B."/>
            <person name="Brenner S.E."/>
            <person name="Batalov S."/>
            <person name="Forrest A.R."/>
            <person name="Zavolan M."/>
            <person name="Davis M.J."/>
            <person name="Wilming L.G."/>
            <person name="Aidinis V."/>
            <person name="Allen J.E."/>
            <person name="Ambesi-Impiombato A."/>
            <person name="Apweiler R."/>
            <person name="Aturaliya R.N."/>
            <person name="Bailey T.L."/>
            <person name="Bansal M."/>
            <person name="Baxter L."/>
            <person name="Beisel K.W."/>
            <person name="Bersano T."/>
            <person name="Bono H."/>
            <person name="Chalk A.M."/>
            <person name="Chiu K.P."/>
            <person name="Choudhary V."/>
            <person name="Christoffels A."/>
            <person name="Clutterbuck D.R."/>
            <person name="Crowe M.L."/>
            <person name="Dalla E."/>
            <person name="Dalrymple B.P."/>
            <person name="de Bono B."/>
            <person name="Della Gatta G."/>
            <person name="di Bernardo D."/>
            <person name="Down T."/>
            <person name="Engstrom P."/>
            <person name="Fagiolini M."/>
            <person name="Faulkner G."/>
            <person name="Fletcher C.F."/>
            <person name="Fukushima T."/>
            <person name="Furuno M."/>
            <person name="Futaki S."/>
            <person name="Gariboldi M."/>
            <person name="Georgii-Hemming P."/>
            <person name="Gingeras T.R."/>
            <person name="Gojobori T."/>
            <person name="Green R.E."/>
            <person name="Gustincich S."/>
            <person name="Harbers M."/>
            <person name="Hayashi Y."/>
            <person name="Hensch T.K."/>
            <person name="Hirokawa N."/>
            <person name="Hill D."/>
            <person name="Huminiecki L."/>
            <person name="Iacono M."/>
            <person name="Ikeo K."/>
            <person name="Iwama A."/>
            <person name="Ishikawa T."/>
            <person name="Jakt M."/>
            <person name="Kanapin A."/>
            <person name="Katoh M."/>
            <person name="Kawasawa Y."/>
            <person name="Kelso J."/>
            <person name="Kitamura H."/>
            <person name="Kitano H."/>
            <person name="Kollias G."/>
            <person name="Krishnan S.P."/>
            <person name="Kruger A."/>
            <person name="Kummerfeld S.K."/>
            <person name="Kurochkin I.V."/>
            <person name="Lareau L.F."/>
            <person name="Lazarevic D."/>
            <person name="Lipovich L."/>
            <person name="Liu J."/>
            <person name="Liuni S."/>
            <person name="McWilliam S."/>
            <person name="Madan Babu M."/>
            <person name="Madera M."/>
            <person name="Marchionni L."/>
            <person name="Matsuda H."/>
            <person name="Matsuzawa S."/>
            <person name="Miki H."/>
            <person name="Mignone F."/>
            <person name="Miyake S."/>
            <person name="Morris K."/>
            <person name="Mottagui-Tabar S."/>
            <person name="Mulder N."/>
            <person name="Nakano N."/>
            <person name="Nakauchi H."/>
            <person name="Ng P."/>
            <person name="Nilsson R."/>
            <person name="Nishiguchi S."/>
            <person name="Nishikawa S."/>
            <person name="Nori F."/>
            <person name="Ohara O."/>
            <person name="Okazaki Y."/>
            <person name="Orlando V."/>
            <person name="Pang K.C."/>
            <person name="Pavan W.J."/>
            <person name="Pavesi G."/>
            <person name="Pesole G."/>
            <person name="Petrovsky N."/>
            <person name="Piazza S."/>
            <person name="Reed J."/>
            <person name="Reid J.F."/>
            <person name="Ring B.Z."/>
            <person name="Ringwald M."/>
            <person name="Rost B."/>
            <person name="Ruan Y."/>
            <person name="Salzberg S.L."/>
            <person name="Sandelin A."/>
            <person name="Schneider C."/>
            <person name="Schoenbach C."/>
            <person name="Sekiguchi K."/>
            <person name="Semple C.A."/>
            <person name="Seno S."/>
            <person name="Sessa L."/>
            <person name="Sheng Y."/>
            <person name="Shibata Y."/>
            <person name="Shimada H."/>
            <person name="Shimada K."/>
            <person name="Silva D."/>
            <person name="Sinclair B."/>
            <person name="Sperling S."/>
            <person name="Stupka E."/>
            <person name="Sugiura K."/>
            <person name="Sultana R."/>
            <person name="Takenaka Y."/>
            <person name="Taki K."/>
            <person name="Tammoja K."/>
            <person name="Tan S.L."/>
            <person name="Tang S."/>
            <person name="Taylor M.S."/>
            <person name="Tegner J."/>
            <person name="Teichmann S.A."/>
            <person name="Ueda H.R."/>
            <person name="van Nimwegen E."/>
            <person name="Verardo R."/>
            <person name="Wei C.L."/>
            <person name="Yagi K."/>
            <person name="Yamanishi H."/>
            <person name="Zabarovsky E."/>
            <person name="Zhu S."/>
            <person name="Zimmer A."/>
            <person name="Hide W."/>
            <person name="Bult C."/>
            <person name="Grimmond S.M."/>
            <person name="Teasdale R.D."/>
            <person name="Liu E.T."/>
            <person name="Brusic V."/>
            <person name="Quackenbush J."/>
            <person name="Wahlestedt C."/>
            <person name="Mattick J.S."/>
            <person name="Hume D.A."/>
            <person name="Kai C."/>
            <person name="Sasaki D."/>
            <person name="Tomaru Y."/>
            <person name="Fukuda S."/>
            <person name="Kanamori-Katayama M."/>
            <person name="Suzuki M."/>
            <person name="Aoki J."/>
            <person name="Arakawa T."/>
            <person name="Iida J."/>
            <person name="Imamura K."/>
            <person name="Itoh M."/>
            <person name="Kato T."/>
            <person name="Kawaji H."/>
            <person name="Kawagashira N."/>
            <person name="Kawashima T."/>
            <person name="Kojima M."/>
            <person name="Kondo S."/>
            <person name="Konno H."/>
            <person name="Nakano K."/>
            <person name="Ninomiya N."/>
            <person name="Nishio T."/>
            <person name="Okada M."/>
            <person name="Plessy C."/>
            <person name="Shibata K."/>
            <person name="Shiraki T."/>
            <person name="Suzuki S."/>
            <person name="Tagami M."/>
            <person name="Waki K."/>
            <person name="Watahiki A."/>
            <person name="Okamura-Oho Y."/>
            <person name="Suzuki H."/>
            <person name="Kawai J."/>
            <person name="Hayashizaki Y."/>
        </authorList>
    </citation>
    <scope>NUCLEOTIDE SEQUENCE [LARGE SCALE MRNA]</scope>
    <source>
        <strain>C57BL/6J</strain>
        <strain>NOD</strain>
        <tissue>Bone marrow</tissue>
        <tissue>Kidney</tissue>
        <tissue>Lung</tissue>
    </source>
</reference>
<reference key="3">
    <citation type="journal article" date="2009" name="PLoS Biol.">
        <title>Lineage-specific biology revealed by a finished genome assembly of the mouse.</title>
        <authorList>
            <person name="Church D.M."/>
            <person name="Goodstadt L."/>
            <person name="Hillier L.W."/>
            <person name="Zody M.C."/>
            <person name="Goldstein S."/>
            <person name="She X."/>
            <person name="Bult C.J."/>
            <person name="Agarwala R."/>
            <person name="Cherry J.L."/>
            <person name="DiCuccio M."/>
            <person name="Hlavina W."/>
            <person name="Kapustin Y."/>
            <person name="Meric P."/>
            <person name="Maglott D."/>
            <person name="Birtle Z."/>
            <person name="Marques A.C."/>
            <person name="Graves T."/>
            <person name="Zhou S."/>
            <person name="Teague B."/>
            <person name="Potamousis K."/>
            <person name="Churas C."/>
            <person name="Place M."/>
            <person name="Herschleb J."/>
            <person name="Runnheim R."/>
            <person name="Forrest D."/>
            <person name="Amos-Landgraf J."/>
            <person name="Schwartz D.C."/>
            <person name="Cheng Z."/>
            <person name="Lindblad-Toh K."/>
            <person name="Eichler E.E."/>
            <person name="Ponting C.P."/>
        </authorList>
    </citation>
    <scope>NUCLEOTIDE SEQUENCE [LARGE SCALE GENOMIC DNA]</scope>
    <source>
        <strain>C57BL/6J</strain>
    </source>
</reference>
<reference key="4">
    <citation type="submission" date="2009-01" db="EMBL/GenBank/DDBJ databases">
        <authorList>
            <person name="Mural R.J."/>
            <person name="Adams M.D."/>
            <person name="Myers E.W."/>
            <person name="Smith H.O."/>
            <person name="Venter J.C."/>
        </authorList>
    </citation>
    <scope>NUCLEOTIDE SEQUENCE [LARGE SCALE GENOMIC DNA]</scope>
</reference>
<reference key="5">
    <citation type="journal article" date="2004" name="Genome Res.">
        <title>The status, quality, and expansion of the NIH full-length cDNA project: the Mammalian Gene Collection (MGC).</title>
        <authorList>
            <consortium name="The MGC Project Team"/>
        </authorList>
    </citation>
    <scope>NUCLEOTIDE SEQUENCE [LARGE SCALE MRNA]</scope>
</reference>
<reference key="6">
    <citation type="journal article" date="2003" name="J. Biol. Chem.">
        <title>Fbs2 is a new member of the E3 ubiquitin ligase family that recognizes sugar chains.</title>
        <authorList>
            <person name="Yoshida Y."/>
            <person name="Tokunaga F."/>
            <person name="Chiba T."/>
            <person name="Iwai K."/>
            <person name="Tanaka K."/>
            <person name="Tai T."/>
        </authorList>
    </citation>
    <scope>FUNCTION</scope>
    <scope>IDENTIFICATION IN A SCF PROTEIN LIGASE COMPLEX</scope>
    <scope>SUGAR-BINDING</scope>
    <scope>TISSUE SPECIFICITY</scope>
</reference>
<reference key="7">
    <citation type="journal article" date="2005" name="EMBO Rep.">
        <title>Glycoprotein-specific ubiquitin ligases recognize N-glycans in unfolded substrates.</title>
        <authorList>
            <person name="Yoshida Y."/>
            <person name="Adachi E."/>
            <person name="Fukiya K."/>
            <person name="Iwai K."/>
            <person name="Tanaka K."/>
        </authorList>
    </citation>
    <scope>FUNCTION</scope>
    <scope>SUGAR-BINDING</scope>
    <scope>INTERACTION WITH VCP</scope>
</reference>
<reference key="8">
    <citation type="journal article" date="2007" name="Proc. Natl. Acad. Sci. U.S.A.">
        <title>Large-scale phosphorylation analysis of mouse liver.</title>
        <authorList>
            <person name="Villen J."/>
            <person name="Beausoleil S.A."/>
            <person name="Gerber S.A."/>
            <person name="Gygi S.P."/>
        </authorList>
    </citation>
    <scope>IDENTIFICATION BY MASS SPECTROMETRY [LARGE SCALE ANALYSIS]</scope>
    <source>
        <tissue>Liver</tissue>
    </source>
</reference>
<reference key="9">
    <citation type="journal article" date="2008" name="J. Biol. Chem.">
        <title>Diversity in tissue expression, substrate binding, and SCF complex formation for a lectin family of ubiquitin ligases.</title>
        <authorList>
            <person name="Glenn K.A."/>
            <person name="Nelson R.F."/>
            <person name="Wen H.M."/>
            <person name="Mallinger A.J."/>
            <person name="Paulson H.L."/>
        </authorList>
    </citation>
    <scope>TISSUE SPECIFICITY</scope>
    <scope>DEVELOPMENTAL STAGE</scope>
</reference>
<reference key="10">
    <citation type="journal article" date="2010" name="Cell">
        <title>A tissue-specific atlas of mouse protein phosphorylation and expression.</title>
        <authorList>
            <person name="Huttlin E.L."/>
            <person name="Jedrychowski M.P."/>
            <person name="Elias J.E."/>
            <person name="Goswami T."/>
            <person name="Rad R."/>
            <person name="Beausoleil S.A."/>
            <person name="Villen J."/>
            <person name="Haas W."/>
            <person name="Sowa M.E."/>
            <person name="Gygi S.P."/>
        </authorList>
    </citation>
    <scope>PHOSPHORYLATION [LARGE SCALE ANALYSIS] AT SER-276 AND THR-280</scope>
    <scope>IDENTIFICATION BY MASS SPECTROMETRY [LARGE SCALE ANALYSIS]</scope>
    <source>
        <tissue>Brain</tissue>
        <tissue>Brown adipose tissue</tissue>
        <tissue>Heart</tissue>
        <tissue>Kidney</tissue>
        <tissue>Liver</tissue>
        <tissue>Lung</tissue>
        <tissue>Pancreas</tissue>
        <tissue>Spleen</tissue>
        <tissue>Testis</tissue>
    </source>
</reference>
<dbReference type="EMBL" id="AF176526">
    <property type="protein sequence ID" value="AAF09135.1"/>
    <property type="molecule type" value="mRNA"/>
</dbReference>
<dbReference type="EMBL" id="AK002840">
    <property type="protein sequence ID" value="BAB22397.1"/>
    <property type="molecule type" value="mRNA"/>
</dbReference>
<dbReference type="EMBL" id="AK150612">
    <property type="protein sequence ID" value="BAE29703.1"/>
    <property type="molecule type" value="mRNA"/>
</dbReference>
<dbReference type="EMBL" id="AK152888">
    <property type="protein sequence ID" value="BAE31571.1"/>
    <property type="molecule type" value="mRNA"/>
</dbReference>
<dbReference type="EMBL" id="AK165867">
    <property type="protein sequence ID" value="BAE38426.1"/>
    <property type="molecule type" value="mRNA"/>
</dbReference>
<dbReference type="EMBL" id="AK170743">
    <property type="protein sequence ID" value="BAE41996.1"/>
    <property type="molecule type" value="mRNA"/>
</dbReference>
<dbReference type="EMBL" id="AK171483">
    <property type="protein sequence ID" value="BAE42484.1"/>
    <property type="molecule type" value="mRNA"/>
</dbReference>
<dbReference type="EMBL" id="AL606929">
    <property type="protein sequence ID" value="CAM14906.1"/>
    <property type="molecule type" value="Genomic_DNA"/>
</dbReference>
<dbReference type="EMBL" id="AL606929">
    <property type="protein sequence ID" value="CAM14908.1"/>
    <property type="status" value="ALT_SEQ"/>
    <property type="molecule type" value="Genomic_DNA"/>
</dbReference>
<dbReference type="EMBL" id="CU207376">
    <property type="protein sequence ID" value="CAQ51912.1"/>
    <property type="molecule type" value="Genomic_DNA"/>
</dbReference>
<dbReference type="EMBL" id="CU207417">
    <property type="protein sequence ID" value="CAQ51912.1"/>
    <property type="status" value="JOINED"/>
    <property type="molecule type" value="Genomic_DNA"/>
</dbReference>
<dbReference type="EMBL" id="CU207376">
    <property type="protein sequence ID" value="CAQ51914.1"/>
    <property type="status" value="ALT_SEQ"/>
    <property type="molecule type" value="Genomic_DNA"/>
</dbReference>
<dbReference type="EMBL" id="CU207417">
    <property type="protein sequence ID" value="CAQ51914.1"/>
    <property type="status" value="JOINED"/>
    <property type="molecule type" value="Genomic_DNA"/>
</dbReference>
<dbReference type="EMBL" id="CU207417">
    <property type="protein sequence ID" value="CAQ52204.1"/>
    <property type="molecule type" value="Genomic_DNA"/>
</dbReference>
<dbReference type="EMBL" id="CU207376">
    <property type="protein sequence ID" value="CAQ52204.1"/>
    <property type="status" value="JOINED"/>
    <property type="molecule type" value="Genomic_DNA"/>
</dbReference>
<dbReference type="EMBL" id="CU207417">
    <property type="protein sequence ID" value="CAQ52206.1"/>
    <property type="status" value="ALT_SEQ"/>
    <property type="molecule type" value="Genomic_DNA"/>
</dbReference>
<dbReference type="EMBL" id="CU207376">
    <property type="protein sequence ID" value="CAQ52206.1"/>
    <property type="status" value="JOINED"/>
    <property type="molecule type" value="Genomic_DNA"/>
</dbReference>
<dbReference type="EMBL" id="CH466594">
    <property type="protein sequence ID" value="EDL14804.1"/>
    <property type="molecule type" value="Genomic_DNA"/>
</dbReference>
<dbReference type="EMBL" id="CH466594">
    <property type="protein sequence ID" value="EDL14805.1"/>
    <property type="molecule type" value="Genomic_DNA"/>
</dbReference>
<dbReference type="EMBL" id="CH466594">
    <property type="protein sequence ID" value="EDL14807.1"/>
    <property type="molecule type" value="Genomic_DNA"/>
</dbReference>
<dbReference type="EMBL" id="BC017512">
    <property type="protein sequence ID" value="AAH17512.1"/>
    <property type="molecule type" value="mRNA"/>
</dbReference>
<dbReference type="CCDS" id="CCDS18933.1"/>
<dbReference type="RefSeq" id="NP_001157176.1">
    <property type="nucleotide sequence ID" value="NM_001163704.1"/>
</dbReference>
<dbReference type="RefSeq" id="NP_001157177.1">
    <property type="nucleotide sequence ID" value="NM_001163705.1"/>
</dbReference>
<dbReference type="RefSeq" id="NP_001157178.1">
    <property type="nucleotide sequence ID" value="NM_001163706.1"/>
</dbReference>
<dbReference type="RefSeq" id="NP_001157179.1">
    <property type="nucleotide sequence ID" value="NM_001163707.1"/>
</dbReference>
<dbReference type="RefSeq" id="NP_056612.1">
    <property type="nucleotide sequence ID" value="NM_015797.4"/>
</dbReference>
<dbReference type="SMR" id="Q9QZN4"/>
<dbReference type="BioGRID" id="206095">
    <property type="interactions" value="11"/>
</dbReference>
<dbReference type="FunCoup" id="Q9QZN4">
    <property type="interactions" value="778"/>
</dbReference>
<dbReference type="IntAct" id="Q9QZN4">
    <property type="interactions" value="1"/>
</dbReference>
<dbReference type="STRING" id="10090.ENSMUSP00000101331"/>
<dbReference type="GlyGen" id="Q9QZN4">
    <property type="glycosylation" value="3 sites, 1 N-linked glycan (1 site), 1 O-linked glycan (2 sites)"/>
</dbReference>
<dbReference type="iPTMnet" id="Q9QZN4"/>
<dbReference type="PhosphoSitePlus" id="Q9QZN4"/>
<dbReference type="SwissPalm" id="Q9QZN4"/>
<dbReference type="jPOST" id="Q9QZN4"/>
<dbReference type="PaxDb" id="10090-ENSMUSP00000101331"/>
<dbReference type="PeptideAtlas" id="Q9QZN4"/>
<dbReference type="ProteomicsDB" id="270967"/>
<dbReference type="Pumba" id="Q9QZN4"/>
<dbReference type="Antibodypedia" id="28155">
    <property type="antibodies" value="241 antibodies from 28 providers"/>
</dbReference>
<dbReference type="DNASU" id="50762"/>
<dbReference type="Ensembl" id="ENSMUST00000030858.14">
    <property type="protein sequence ID" value="ENSMUSP00000030858.8"/>
    <property type="gene ID" value="ENSMUSG00000055401.15"/>
</dbReference>
<dbReference type="Ensembl" id="ENSMUST00000056965.12">
    <property type="protein sequence ID" value="ENSMUSP00000062348.6"/>
    <property type="gene ID" value="ENSMUSG00000055401.15"/>
</dbReference>
<dbReference type="Ensembl" id="ENSMUST00000105706.8">
    <property type="protein sequence ID" value="ENSMUSP00000101331.2"/>
    <property type="gene ID" value="ENSMUSG00000055401.15"/>
</dbReference>
<dbReference type="Ensembl" id="ENSMUST00000168503.8">
    <property type="protein sequence ID" value="ENSMUSP00000130188.2"/>
    <property type="gene ID" value="ENSMUSG00000055401.15"/>
</dbReference>
<dbReference type="GeneID" id="50762"/>
<dbReference type="KEGG" id="mmu:50762"/>
<dbReference type="UCSC" id="uc008vud.2">
    <property type="organism name" value="mouse"/>
</dbReference>
<dbReference type="AGR" id="MGI:1354743"/>
<dbReference type="CTD" id="26270"/>
<dbReference type="MGI" id="MGI:1354743">
    <property type="gene designation" value="Fbxo6"/>
</dbReference>
<dbReference type="VEuPathDB" id="HostDB:ENSMUSG00000055401"/>
<dbReference type="eggNOG" id="ENOG502RZA6">
    <property type="taxonomic scope" value="Eukaryota"/>
</dbReference>
<dbReference type="GeneTree" id="ENSGT00940000159980"/>
<dbReference type="InParanoid" id="Q9QZN4"/>
<dbReference type="OMA" id="HIFFQHG"/>
<dbReference type="OrthoDB" id="1107553at2759"/>
<dbReference type="PhylomeDB" id="Q9QZN4"/>
<dbReference type="TreeFam" id="TF320527"/>
<dbReference type="Reactome" id="R-MMU-8951664">
    <property type="pathway name" value="Neddylation"/>
</dbReference>
<dbReference type="Reactome" id="R-MMU-983168">
    <property type="pathway name" value="Antigen processing: Ubiquitination &amp; Proteasome degradation"/>
</dbReference>
<dbReference type="UniPathway" id="UPA00143"/>
<dbReference type="BioGRID-ORCS" id="50762">
    <property type="hits" value="2 hits in 82 CRISPR screens"/>
</dbReference>
<dbReference type="CD-CODE" id="CE726F99">
    <property type="entry name" value="Postsynaptic density"/>
</dbReference>
<dbReference type="ChiTaRS" id="Fbxo2">
    <property type="organism name" value="mouse"/>
</dbReference>
<dbReference type="PRO" id="PR:Q9QZN4"/>
<dbReference type="Proteomes" id="UP000000589">
    <property type="component" value="Chromosome 4"/>
</dbReference>
<dbReference type="RNAct" id="Q9QZN4">
    <property type="molecule type" value="protein"/>
</dbReference>
<dbReference type="Bgee" id="ENSMUSG00000055401">
    <property type="expression patterns" value="Expressed in urinary bladder and 60 other cell types or tissues"/>
</dbReference>
<dbReference type="ExpressionAtlas" id="Q9QZN4">
    <property type="expression patterns" value="baseline and differential"/>
</dbReference>
<dbReference type="GO" id="GO:0005737">
    <property type="term" value="C:cytoplasm"/>
    <property type="evidence" value="ECO:0000250"/>
    <property type="project" value="UniProtKB"/>
</dbReference>
<dbReference type="GO" id="GO:0044322">
    <property type="term" value="C:endoplasmic reticulum quality control compartment"/>
    <property type="evidence" value="ECO:0000314"/>
    <property type="project" value="UniProtKB"/>
</dbReference>
<dbReference type="GO" id="GO:0019005">
    <property type="term" value="C:SCF ubiquitin ligase complex"/>
    <property type="evidence" value="ECO:0000314"/>
    <property type="project" value="UniProtKB"/>
</dbReference>
<dbReference type="GO" id="GO:0030246">
    <property type="term" value="F:carbohydrate binding"/>
    <property type="evidence" value="ECO:0000314"/>
    <property type="project" value="MGI"/>
</dbReference>
<dbReference type="GO" id="GO:0006281">
    <property type="term" value="P:DNA repair"/>
    <property type="evidence" value="ECO:0007669"/>
    <property type="project" value="UniProtKB-KW"/>
</dbReference>
<dbReference type="GO" id="GO:0036503">
    <property type="term" value="P:ERAD pathway"/>
    <property type="evidence" value="ECO:0000314"/>
    <property type="project" value="ParkinsonsUK-UCL"/>
</dbReference>
<dbReference type="GO" id="GO:0006516">
    <property type="term" value="P:glycoprotein catabolic process"/>
    <property type="evidence" value="ECO:0000314"/>
    <property type="project" value="MGI"/>
</dbReference>
<dbReference type="GO" id="GO:0016567">
    <property type="term" value="P:protein ubiquitination"/>
    <property type="evidence" value="ECO:0007669"/>
    <property type="project" value="UniProtKB-UniPathway"/>
</dbReference>
<dbReference type="GO" id="GO:0006986">
    <property type="term" value="P:response to unfolded protein"/>
    <property type="evidence" value="ECO:0007669"/>
    <property type="project" value="UniProtKB-KW"/>
</dbReference>
<dbReference type="GO" id="GO:0031146">
    <property type="term" value="P:SCF-dependent proteasomal ubiquitin-dependent protein catabolic process"/>
    <property type="evidence" value="ECO:0000314"/>
    <property type="project" value="UniProtKB"/>
</dbReference>
<dbReference type="GO" id="GO:0006511">
    <property type="term" value="P:ubiquitin-dependent protein catabolic process"/>
    <property type="evidence" value="ECO:0000314"/>
    <property type="project" value="ParkinsonsUK-UCL"/>
</dbReference>
<dbReference type="CDD" id="cd22168">
    <property type="entry name" value="F-box_FBXO6-like"/>
    <property type="match status" value="1"/>
</dbReference>
<dbReference type="FunFam" id="2.60.120.260:FF:000012">
    <property type="entry name" value="F-box only protein 2"/>
    <property type="match status" value="1"/>
</dbReference>
<dbReference type="FunFam" id="1.20.1280.50:FF:000002">
    <property type="entry name" value="F-box only protein 44"/>
    <property type="match status" value="1"/>
</dbReference>
<dbReference type="Gene3D" id="1.20.1280.50">
    <property type="match status" value="1"/>
</dbReference>
<dbReference type="Gene3D" id="2.60.120.260">
    <property type="entry name" value="Galactose-binding domain-like"/>
    <property type="match status" value="1"/>
</dbReference>
<dbReference type="InterPro" id="IPR007397">
    <property type="entry name" value="F-box-assoc_dom"/>
</dbReference>
<dbReference type="InterPro" id="IPR036047">
    <property type="entry name" value="F-box-like_dom_sf"/>
</dbReference>
<dbReference type="InterPro" id="IPR001810">
    <property type="entry name" value="F-box_dom"/>
</dbReference>
<dbReference type="InterPro" id="IPR039752">
    <property type="entry name" value="F-box_only"/>
</dbReference>
<dbReference type="InterPro" id="IPR008979">
    <property type="entry name" value="Galactose-bd-like_sf"/>
</dbReference>
<dbReference type="PANTHER" id="PTHR12125:SF12">
    <property type="entry name" value="F-BOX ONLY PROTEIN 6"/>
    <property type="match status" value="1"/>
</dbReference>
<dbReference type="PANTHER" id="PTHR12125">
    <property type="entry name" value="F-BOX ONLY PROTEIN 6-LIKE PROTEIN"/>
    <property type="match status" value="1"/>
</dbReference>
<dbReference type="Pfam" id="PF12937">
    <property type="entry name" value="F-box-like"/>
    <property type="match status" value="1"/>
</dbReference>
<dbReference type="Pfam" id="PF04300">
    <property type="entry name" value="FBA"/>
    <property type="match status" value="1"/>
</dbReference>
<dbReference type="SMART" id="SM01198">
    <property type="entry name" value="FBA"/>
    <property type="match status" value="1"/>
</dbReference>
<dbReference type="SMART" id="SM00256">
    <property type="entry name" value="FBOX"/>
    <property type="match status" value="1"/>
</dbReference>
<dbReference type="SUPFAM" id="SSF81383">
    <property type="entry name" value="F-box domain"/>
    <property type="match status" value="1"/>
</dbReference>
<dbReference type="SUPFAM" id="SSF49785">
    <property type="entry name" value="Galactose-binding domain-like"/>
    <property type="match status" value="1"/>
</dbReference>
<dbReference type="PROSITE" id="PS51114">
    <property type="entry name" value="FBA"/>
    <property type="match status" value="1"/>
</dbReference>
<dbReference type="PROSITE" id="PS50181">
    <property type="entry name" value="FBOX"/>
    <property type="match status" value="1"/>
</dbReference>
<name>FBX6_MOUSE</name>
<sequence>MVHINELPENILLELFIHIPAPQLLRNCRLVCRLWRDLIDVVSLWKRKSLREGFFTKDRCEPVEDWKVFYILCSLQRNLLRNPCAEENLSSWRIDSNGGDRWKVETLPGSCGTSFPDNKVKKYFVTSFEMCLKSQMVDLKAEGYCEELMDTFRPDIVVKDWVAPRADCGCTYQLRVQLASADYIVLASFEPPPVTFQQWNDAKWQEISHTFSDYPPGVRHILFQHGGQDTQFWKGWYGPRVTNSSIIISHRTAKNPPPARTLPEETVVIGRRRRASDSNTHEGFFWQGLWQRLRR</sequence>
<protein>
    <recommendedName>
        <fullName>F-box only protein 6</fullName>
    </recommendedName>
    <alternativeName>
        <fullName>F-box only protein 6b</fullName>
    </alternativeName>
    <alternativeName>
        <fullName>F-box protein that recognizes sugar chains 2</fullName>
    </alternativeName>
    <alternativeName>
        <fullName>F-box/G-domain protein 2</fullName>
    </alternativeName>
</protein>
<proteinExistence type="evidence at protein level"/>
<keyword id="KW-0963">Cytoplasm</keyword>
<keyword id="KW-0227">DNA damage</keyword>
<keyword id="KW-0234">DNA repair</keyword>
<keyword id="KW-0597">Phosphoprotein</keyword>
<keyword id="KW-1185">Reference proteome</keyword>
<keyword id="KW-0833">Ubl conjugation pathway</keyword>
<keyword id="KW-0834">Unfolded protein response</keyword>
<comment type="function">
    <text evidence="1 5 6">Substrate-recognition component of some SCF (SKP1-CUL1-F-box protein)-type E3 ubiquitin ligase complexes. Involved in DNA damage response by specifically recognizing activated CHEK1 (phosphorylated on 'Ser-345'), promoting its ubiquitination and degradation. Ubiquitination of CHEK1 is required to ensure that activated CHEK1 does not accumulate as cells progress through S phase, or when replication forks encounter transient impediments during normal DNA replication (By similarity). Involved in endoplasmic reticulum-associated degradation pathway (ERAD) for misfolded lumenal proteins by recognizing and binding sugar chains on unfolded glycoproteins that are retrotranslocated into the cytosol and promoting their ubiquitination and subsequent degradation. Able to recognize and bind denatured glycoproteins, which are modified with not only high-mannose but also complex-type oligosaccharides. Also recognizes sulfated glycans.</text>
</comment>
<comment type="pathway">
    <text>Protein modification; protein ubiquitination.</text>
</comment>
<comment type="subunit">
    <text evidence="1 5 6">Interacts with CHEK1 and CUL1 (By similarity). Part of a SCF (SKP1-cullin-F-box) protein ligase complex. Interacts with VCP.</text>
</comment>
<comment type="subcellular location">
    <subcellularLocation>
        <location evidence="1">Cytoplasm</location>
    </subcellularLocation>
</comment>
<comment type="tissue specificity">
    <text evidence="5 7">Present in liver and kidney (at protein level). Widely expressed.</text>
</comment>
<comment type="developmental stage">
    <text evidence="7">Weakly expressed in embryos.</text>
</comment>
<comment type="sequence caution" evidence="8">
    <conflict type="erroneous gene model prediction">
        <sequence resource="EMBL-CDS" id="CAM14908"/>
    </conflict>
</comment>
<comment type="sequence caution" evidence="8">
    <conflict type="erroneous gene model prediction">
        <sequence resource="EMBL-CDS" id="CAQ51914"/>
    </conflict>
</comment>
<comment type="sequence caution" evidence="8">
    <conflict type="erroneous gene model prediction">
        <sequence resource="EMBL-CDS" id="CAQ52206"/>
    </conflict>
</comment>
<organism>
    <name type="scientific">Mus musculus</name>
    <name type="common">Mouse</name>
    <dbReference type="NCBI Taxonomy" id="10090"/>
    <lineage>
        <taxon>Eukaryota</taxon>
        <taxon>Metazoa</taxon>
        <taxon>Chordata</taxon>
        <taxon>Craniata</taxon>
        <taxon>Vertebrata</taxon>
        <taxon>Euteleostomi</taxon>
        <taxon>Mammalia</taxon>
        <taxon>Eutheria</taxon>
        <taxon>Euarchontoglires</taxon>
        <taxon>Glires</taxon>
        <taxon>Rodentia</taxon>
        <taxon>Myomorpha</taxon>
        <taxon>Muroidea</taxon>
        <taxon>Muridae</taxon>
        <taxon>Murinae</taxon>
        <taxon>Mus</taxon>
        <taxon>Mus</taxon>
    </lineage>
</organism>